<gene>
    <name evidence="1" type="primary">kdpB</name>
    <name type="ordered locus">BAMEG_3818</name>
</gene>
<reference key="1">
    <citation type="submission" date="2008-10" db="EMBL/GenBank/DDBJ databases">
        <title>Genome sequence of Bacillus anthracis str. CDC 684.</title>
        <authorList>
            <person name="Dodson R.J."/>
            <person name="Munk A.C."/>
            <person name="Brettin T."/>
            <person name="Bruce D."/>
            <person name="Detter C."/>
            <person name="Tapia R."/>
            <person name="Han C."/>
            <person name="Sutton G."/>
            <person name="Sims D."/>
        </authorList>
    </citation>
    <scope>NUCLEOTIDE SEQUENCE [LARGE SCALE GENOMIC DNA]</scope>
    <source>
        <strain>CDC 684 / NRRL 3495</strain>
    </source>
</reference>
<comment type="function">
    <text evidence="1">Part of the high-affinity ATP-driven potassium transport (or Kdp) system, which catalyzes the hydrolysis of ATP coupled with the electrogenic transport of potassium into the cytoplasm. This subunit is responsible for energy coupling to the transport system and for the release of the potassium ions to the cytoplasm.</text>
</comment>
<comment type="catalytic activity">
    <reaction evidence="1">
        <text>K(+)(out) + ATP + H2O = K(+)(in) + ADP + phosphate + H(+)</text>
        <dbReference type="Rhea" id="RHEA:16777"/>
        <dbReference type="ChEBI" id="CHEBI:15377"/>
        <dbReference type="ChEBI" id="CHEBI:15378"/>
        <dbReference type="ChEBI" id="CHEBI:29103"/>
        <dbReference type="ChEBI" id="CHEBI:30616"/>
        <dbReference type="ChEBI" id="CHEBI:43474"/>
        <dbReference type="ChEBI" id="CHEBI:456216"/>
        <dbReference type="EC" id="7.2.2.6"/>
    </reaction>
    <physiologicalReaction direction="left-to-right" evidence="1">
        <dbReference type="Rhea" id="RHEA:16778"/>
    </physiologicalReaction>
</comment>
<comment type="subunit">
    <text evidence="1">The system is composed of three essential subunits: KdpA, KdpB and KdpC.</text>
</comment>
<comment type="subcellular location">
    <subcellularLocation>
        <location evidence="1">Cell membrane</location>
        <topology evidence="1">Multi-pass membrane protein</topology>
    </subcellularLocation>
</comment>
<comment type="similarity">
    <text evidence="1">Belongs to the cation transport ATPase (P-type) (TC 3.A.3) family. Type IA subfamily.</text>
</comment>
<name>KDPB_BACAC</name>
<feature type="chain" id="PRO_1000132602" description="Potassium-transporting ATPase ATP-binding subunit">
    <location>
        <begin position="1"/>
        <end position="697"/>
    </location>
</feature>
<feature type="transmembrane region" description="Helical" evidence="1">
    <location>
        <begin position="55"/>
        <end position="75"/>
    </location>
</feature>
<feature type="transmembrane region" description="Helical" evidence="1">
    <location>
        <begin position="79"/>
        <end position="99"/>
    </location>
</feature>
<feature type="transmembrane region" description="Helical" evidence="1">
    <location>
        <begin position="245"/>
        <end position="265"/>
    </location>
</feature>
<feature type="transmembrane region" description="Helical" evidence="1">
    <location>
        <begin position="271"/>
        <end position="291"/>
    </location>
</feature>
<feature type="transmembrane region" description="Helical" evidence="1">
    <location>
        <begin position="605"/>
        <end position="625"/>
    </location>
</feature>
<feature type="transmembrane region" description="Helical" evidence="1">
    <location>
        <begin position="633"/>
        <end position="653"/>
    </location>
</feature>
<feature type="transmembrane region" description="Helical" evidence="1">
    <location>
        <begin position="677"/>
        <end position="697"/>
    </location>
</feature>
<feature type="active site" description="4-aspartylphosphate intermediate" evidence="1">
    <location>
        <position position="324"/>
    </location>
</feature>
<feature type="binding site" evidence="1">
    <location>
        <position position="361"/>
    </location>
    <ligand>
        <name>ATP</name>
        <dbReference type="ChEBI" id="CHEBI:30616"/>
    </ligand>
</feature>
<feature type="binding site" evidence="1">
    <location>
        <position position="365"/>
    </location>
    <ligand>
        <name>ATP</name>
        <dbReference type="ChEBI" id="CHEBI:30616"/>
    </ligand>
</feature>
<feature type="binding site" evidence="1">
    <location>
        <begin position="393"/>
        <end position="400"/>
    </location>
    <ligand>
        <name>ATP</name>
        <dbReference type="ChEBI" id="CHEBI:30616"/>
    </ligand>
</feature>
<feature type="binding site" evidence="1">
    <location>
        <position position="412"/>
    </location>
    <ligand>
        <name>ATP</name>
        <dbReference type="ChEBI" id="CHEBI:30616"/>
    </ligand>
</feature>
<feature type="binding site" evidence="1">
    <location>
        <position position="535"/>
    </location>
    <ligand>
        <name>Mg(2+)</name>
        <dbReference type="ChEBI" id="CHEBI:18420"/>
    </ligand>
</feature>
<feature type="binding site" evidence="1">
    <location>
        <position position="539"/>
    </location>
    <ligand>
        <name>Mg(2+)</name>
        <dbReference type="ChEBI" id="CHEBI:18420"/>
    </ligand>
</feature>
<dbReference type="EC" id="7.2.2.6" evidence="1"/>
<dbReference type="EMBL" id="CP001215">
    <property type="protein sequence ID" value="ACP13691.1"/>
    <property type="molecule type" value="Genomic_DNA"/>
</dbReference>
<dbReference type="SMR" id="C3LF99"/>
<dbReference type="KEGG" id="bah:BAMEG_3818"/>
<dbReference type="HOGENOM" id="CLU_025728_2_0_9"/>
<dbReference type="GO" id="GO:0005886">
    <property type="term" value="C:plasma membrane"/>
    <property type="evidence" value="ECO:0007669"/>
    <property type="project" value="UniProtKB-SubCell"/>
</dbReference>
<dbReference type="GO" id="GO:0005524">
    <property type="term" value="F:ATP binding"/>
    <property type="evidence" value="ECO:0007669"/>
    <property type="project" value="UniProtKB-UniRule"/>
</dbReference>
<dbReference type="GO" id="GO:0016887">
    <property type="term" value="F:ATP hydrolysis activity"/>
    <property type="evidence" value="ECO:0007669"/>
    <property type="project" value="InterPro"/>
</dbReference>
<dbReference type="GO" id="GO:0000287">
    <property type="term" value="F:magnesium ion binding"/>
    <property type="evidence" value="ECO:0007669"/>
    <property type="project" value="UniProtKB-UniRule"/>
</dbReference>
<dbReference type="GO" id="GO:0008556">
    <property type="term" value="F:P-type potassium transmembrane transporter activity"/>
    <property type="evidence" value="ECO:0007669"/>
    <property type="project" value="UniProtKB-UniRule"/>
</dbReference>
<dbReference type="CDD" id="cd02078">
    <property type="entry name" value="P-type_ATPase_K"/>
    <property type="match status" value="1"/>
</dbReference>
<dbReference type="FunFam" id="2.70.150.10:FF:000010">
    <property type="entry name" value="Potassium-transporting ATPase ATP-binding subunit"/>
    <property type="match status" value="1"/>
</dbReference>
<dbReference type="FunFam" id="3.40.1110.10:FF:000007">
    <property type="entry name" value="Potassium-transporting ATPase ATP-binding subunit"/>
    <property type="match status" value="1"/>
</dbReference>
<dbReference type="Gene3D" id="3.40.1110.10">
    <property type="entry name" value="Calcium-transporting ATPase, cytoplasmic domain N"/>
    <property type="match status" value="1"/>
</dbReference>
<dbReference type="Gene3D" id="2.70.150.10">
    <property type="entry name" value="Calcium-transporting ATPase, cytoplasmic transduction domain A"/>
    <property type="match status" value="1"/>
</dbReference>
<dbReference type="Gene3D" id="3.40.50.1000">
    <property type="entry name" value="HAD superfamily/HAD-like"/>
    <property type="match status" value="1"/>
</dbReference>
<dbReference type="HAMAP" id="MF_00285">
    <property type="entry name" value="KdpB"/>
    <property type="match status" value="1"/>
</dbReference>
<dbReference type="InterPro" id="IPR023299">
    <property type="entry name" value="ATPase_P-typ_cyto_dom_N"/>
</dbReference>
<dbReference type="InterPro" id="IPR018303">
    <property type="entry name" value="ATPase_P-typ_P_site"/>
</dbReference>
<dbReference type="InterPro" id="IPR023298">
    <property type="entry name" value="ATPase_P-typ_TM_dom_sf"/>
</dbReference>
<dbReference type="InterPro" id="IPR008250">
    <property type="entry name" value="ATPase_P-typ_transduc_dom_A_sf"/>
</dbReference>
<dbReference type="InterPro" id="IPR036412">
    <property type="entry name" value="HAD-like_sf"/>
</dbReference>
<dbReference type="InterPro" id="IPR023214">
    <property type="entry name" value="HAD_sf"/>
</dbReference>
<dbReference type="InterPro" id="IPR006391">
    <property type="entry name" value="P-type_ATPase_bsu_IA"/>
</dbReference>
<dbReference type="InterPro" id="IPR001757">
    <property type="entry name" value="P_typ_ATPase"/>
</dbReference>
<dbReference type="InterPro" id="IPR044492">
    <property type="entry name" value="P_typ_ATPase_HD_dom"/>
</dbReference>
<dbReference type="NCBIfam" id="TIGR01494">
    <property type="entry name" value="ATPase_P-type"/>
    <property type="match status" value="2"/>
</dbReference>
<dbReference type="NCBIfam" id="TIGR01497">
    <property type="entry name" value="kdpB"/>
    <property type="match status" value="1"/>
</dbReference>
<dbReference type="PANTHER" id="PTHR43743">
    <property type="entry name" value="POTASSIUM-TRANSPORTING ATPASE ATP-BINDING SUBUNIT"/>
    <property type="match status" value="1"/>
</dbReference>
<dbReference type="PANTHER" id="PTHR43743:SF1">
    <property type="entry name" value="POTASSIUM-TRANSPORTING ATPASE ATP-BINDING SUBUNIT"/>
    <property type="match status" value="1"/>
</dbReference>
<dbReference type="Pfam" id="PF00122">
    <property type="entry name" value="E1-E2_ATPase"/>
    <property type="match status" value="1"/>
</dbReference>
<dbReference type="Pfam" id="PF00702">
    <property type="entry name" value="Hydrolase"/>
    <property type="match status" value="1"/>
</dbReference>
<dbReference type="PRINTS" id="PR00119">
    <property type="entry name" value="CATATPASE"/>
</dbReference>
<dbReference type="SFLD" id="SFLDS00003">
    <property type="entry name" value="Haloacid_Dehalogenase"/>
    <property type="match status" value="1"/>
</dbReference>
<dbReference type="SFLD" id="SFLDF00027">
    <property type="entry name" value="p-type_atpase"/>
    <property type="match status" value="1"/>
</dbReference>
<dbReference type="SUPFAM" id="SSF81653">
    <property type="entry name" value="Calcium ATPase, transduction domain A"/>
    <property type="match status" value="1"/>
</dbReference>
<dbReference type="SUPFAM" id="SSF81665">
    <property type="entry name" value="Calcium ATPase, transmembrane domain M"/>
    <property type="match status" value="1"/>
</dbReference>
<dbReference type="SUPFAM" id="SSF56784">
    <property type="entry name" value="HAD-like"/>
    <property type="match status" value="1"/>
</dbReference>
<dbReference type="PROSITE" id="PS00154">
    <property type="entry name" value="ATPASE_E1_E2"/>
    <property type="match status" value="1"/>
</dbReference>
<evidence type="ECO:0000255" key="1">
    <source>
        <dbReference type="HAMAP-Rule" id="MF_00285"/>
    </source>
</evidence>
<sequence length="697" mass="74665">MMRPVVVKEKRVNESHIHAVEDEVRQAKTMDRDIVKHAMKQSVAKLNPKVMIKNPIMFVVEIGFVITFILSFLPSHSSSIPGWFNITVSLILLFTVLFANFAEALAEGRGKAQADSLKQSKKDVFANVVKENGEIVQVSATDLRKDDVVIVKQGEMIPSDGEVIKGLASVDESAITGESAPVIKEAGGDFCSVTGGTMVVSDEITIVITSNPGKSFIDKMISLVEGAARQKTPNEIALNTVLTSLTLIFLIVVVTLPIFTNYLGFQIDTAVLVALLVCLIPTTIGGLLSAIGIAGMDRVTKFNVLAMSGKAVEAAGDINTIILDKTGTITFGNRMAHTLLPVGNETIEQVGKWAAISSVLDETPEGRSVIEYVQAKSISYNRELAEQGEFIPFKAETRMSGVDLQDGMKVRKGAVGSVIEWVRSQGGTIPKDVNQKADFISKEGGTPLVVAVDNRIYGLIYLKDTVKPGMRERFEQLRQMGIKTVMCTGDNPLTAATIAKEAGVDEFVAECKPEDKIAVIKAEQDKGKLVAMTGDGTNDAPALAQADVGLAMNSGTTAAKEAANMIDLDSNPTKIIEVVGIGKQLLMTRGALTTFSIANDIAKYFAIIPAMFTLAIPQMEALNIMKLTSPLSAILSALLFNAVIIPLLIPLAMKGIAYKPMSSNALLGRNLLIYGLGGVIVPFIGIKVIDIIVGLFI</sequence>
<accession>C3LF99</accession>
<proteinExistence type="inferred from homology"/>
<protein>
    <recommendedName>
        <fullName evidence="1">Potassium-transporting ATPase ATP-binding subunit</fullName>
        <ecNumber evidence="1">7.2.2.6</ecNumber>
    </recommendedName>
    <alternativeName>
        <fullName evidence="1">ATP phosphohydrolase [potassium-transporting] B chain</fullName>
    </alternativeName>
    <alternativeName>
        <fullName evidence="1">Potassium-binding and translocating subunit B</fullName>
    </alternativeName>
    <alternativeName>
        <fullName evidence="1">Potassium-translocating ATPase B chain</fullName>
    </alternativeName>
</protein>
<keyword id="KW-0067">ATP-binding</keyword>
<keyword id="KW-1003">Cell membrane</keyword>
<keyword id="KW-0406">Ion transport</keyword>
<keyword id="KW-0460">Magnesium</keyword>
<keyword id="KW-0472">Membrane</keyword>
<keyword id="KW-0479">Metal-binding</keyword>
<keyword id="KW-0547">Nucleotide-binding</keyword>
<keyword id="KW-0597">Phosphoprotein</keyword>
<keyword id="KW-0630">Potassium</keyword>
<keyword id="KW-0633">Potassium transport</keyword>
<keyword id="KW-1278">Translocase</keyword>
<keyword id="KW-0812">Transmembrane</keyword>
<keyword id="KW-1133">Transmembrane helix</keyword>
<keyword id="KW-0813">Transport</keyword>
<organism>
    <name type="scientific">Bacillus anthracis (strain CDC 684 / NRRL 3495)</name>
    <dbReference type="NCBI Taxonomy" id="568206"/>
    <lineage>
        <taxon>Bacteria</taxon>
        <taxon>Bacillati</taxon>
        <taxon>Bacillota</taxon>
        <taxon>Bacilli</taxon>
        <taxon>Bacillales</taxon>
        <taxon>Bacillaceae</taxon>
        <taxon>Bacillus</taxon>
        <taxon>Bacillus cereus group</taxon>
    </lineage>
</organism>